<feature type="chain" id="PRO_0000253982" description="Anaphase-promoting complex subunit 13">
    <location>
        <begin position="1"/>
        <end position="74"/>
    </location>
</feature>
<feature type="region of interest" description="Disordered" evidence="2">
    <location>
        <begin position="33"/>
        <end position="53"/>
    </location>
</feature>
<sequence>MDSEVQRDGRILDLIDDAWREDKLPYEDVAIPLNELPDPEQDNGGTTESVKEQEMKWTDLALQYLHENVPPIGN</sequence>
<keyword id="KW-0131">Cell cycle</keyword>
<keyword id="KW-0132">Cell division</keyword>
<keyword id="KW-0498">Mitosis</keyword>
<keyword id="KW-0539">Nucleus</keyword>
<keyword id="KW-1185">Reference proteome</keyword>
<keyword id="KW-0833">Ubl conjugation pathway</keyword>
<comment type="function">
    <text evidence="1">Component of the anaphase promoting complex/cyclosome (APC/C), a cell cycle-regulated E3 ubiquitin ligase that controls progression through mitosis and the G1 phase of the cell cycle. The APC/C complex acts by mediating ubiquitination and subsequent degradation of target proteins: it mainly mediates the formation of 'Lys-11'-linked polyubiquitin chains and, to a lower extent, the formation of 'Lys-48'- and 'Lys-63'-linked polyubiquitin chains. The APC/C complex catalyzes assembly of branched 'Lys-11'-/'Lys-48'-linked branched ubiquitin chains on target proteins.</text>
</comment>
<comment type="pathway">
    <text evidence="1">Protein modification; protein ubiquitination.</text>
</comment>
<comment type="subunit">
    <text evidence="1">The mammalian APC/C is composed at least of 14 distinct subunits ANAPC1, ANAPC2, CDC27/APC3, ANAPC4, ANAPC5, CDC16/APC6, ANAPC7, CDC23/APC8, ANAPC10, ANAPC11, CDC26/APC12, ANAPC13, ANAPC15 and ANAPC16 that assemble into a complex of at least 19 chains with a combined molecular mass of around 1.2 MDa; APC/C interacts with FZR1 and FBXO5.</text>
</comment>
<comment type="subcellular location">
    <subcellularLocation>
        <location evidence="3">Nucleus</location>
    </subcellularLocation>
</comment>
<comment type="similarity">
    <text evidence="3">Belongs to the APC13 family.</text>
</comment>
<protein>
    <recommendedName>
        <fullName>Anaphase-promoting complex subunit 13</fullName>
        <shortName>APC13</shortName>
    </recommendedName>
    <alternativeName>
        <fullName>Cyclosome subunit 13</fullName>
    </alternativeName>
</protein>
<reference key="1">
    <citation type="submission" date="2004-11" db="EMBL/GenBank/DDBJ databases">
        <authorList>
            <consortium name="The German cDNA consortium"/>
        </authorList>
    </citation>
    <scope>NUCLEOTIDE SEQUENCE [LARGE SCALE MRNA]</scope>
    <source>
        <tissue>Heart</tissue>
    </source>
</reference>
<dbReference type="EMBL" id="CR858529">
    <property type="protein sequence ID" value="CAH90756.1"/>
    <property type="molecule type" value="mRNA"/>
</dbReference>
<dbReference type="RefSeq" id="NP_001127330.1">
    <property type="nucleotide sequence ID" value="NM_001133858.1"/>
</dbReference>
<dbReference type="SMR" id="Q5RBV4"/>
<dbReference type="STRING" id="9601.ENSPPYP00000015799"/>
<dbReference type="GeneID" id="100174391"/>
<dbReference type="KEGG" id="pon:100174391"/>
<dbReference type="CTD" id="25847"/>
<dbReference type="eggNOG" id="ENOG502S4J1">
    <property type="taxonomic scope" value="Eukaryota"/>
</dbReference>
<dbReference type="InParanoid" id="Q5RBV4"/>
<dbReference type="OrthoDB" id="25675at2759"/>
<dbReference type="UniPathway" id="UPA00143"/>
<dbReference type="Proteomes" id="UP000001595">
    <property type="component" value="Unplaced"/>
</dbReference>
<dbReference type="GO" id="GO:0005680">
    <property type="term" value="C:anaphase-promoting complex"/>
    <property type="evidence" value="ECO:0000250"/>
    <property type="project" value="UniProtKB"/>
</dbReference>
<dbReference type="GO" id="GO:0031145">
    <property type="term" value="P:anaphase-promoting complex-dependent catabolic process"/>
    <property type="evidence" value="ECO:0000250"/>
    <property type="project" value="UniProtKB"/>
</dbReference>
<dbReference type="GO" id="GO:0051301">
    <property type="term" value="P:cell division"/>
    <property type="evidence" value="ECO:0007669"/>
    <property type="project" value="UniProtKB-KW"/>
</dbReference>
<dbReference type="GO" id="GO:0141198">
    <property type="term" value="P:protein branched polyubiquitination"/>
    <property type="evidence" value="ECO:0000250"/>
    <property type="project" value="UniProtKB"/>
</dbReference>
<dbReference type="GO" id="GO:0070979">
    <property type="term" value="P:protein K11-linked ubiquitination"/>
    <property type="evidence" value="ECO:0000250"/>
    <property type="project" value="UniProtKB"/>
</dbReference>
<dbReference type="GO" id="GO:0070936">
    <property type="term" value="P:protein K48-linked ubiquitination"/>
    <property type="evidence" value="ECO:0000250"/>
    <property type="project" value="UniProtKB"/>
</dbReference>
<dbReference type="InterPro" id="IPR008401">
    <property type="entry name" value="Apc13"/>
</dbReference>
<dbReference type="PANTHER" id="PTHR28672">
    <property type="entry name" value="ANAPHASE-PROMOTING COMPLEX SUBUNIT 13"/>
    <property type="match status" value="1"/>
</dbReference>
<dbReference type="PANTHER" id="PTHR28672:SF1">
    <property type="entry name" value="ANAPHASE-PROMOTING COMPLEX SUBUNIT 13"/>
    <property type="match status" value="1"/>
</dbReference>
<dbReference type="Pfam" id="PF05839">
    <property type="entry name" value="Apc13p"/>
    <property type="match status" value="1"/>
</dbReference>
<name>APC13_PONAB</name>
<gene>
    <name type="primary">ANAPC13</name>
</gene>
<evidence type="ECO:0000250" key="1">
    <source>
        <dbReference type="UniProtKB" id="Q9BS18"/>
    </source>
</evidence>
<evidence type="ECO:0000256" key="2">
    <source>
        <dbReference type="SAM" id="MobiDB-lite"/>
    </source>
</evidence>
<evidence type="ECO:0000305" key="3"/>
<organism>
    <name type="scientific">Pongo abelii</name>
    <name type="common">Sumatran orangutan</name>
    <name type="synonym">Pongo pygmaeus abelii</name>
    <dbReference type="NCBI Taxonomy" id="9601"/>
    <lineage>
        <taxon>Eukaryota</taxon>
        <taxon>Metazoa</taxon>
        <taxon>Chordata</taxon>
        <taxon>Craniata</taxon>
        <taxon>Vertebrata</taxon>
        <taxon>Euteleostomi</taxon>
        <taxon>Mammalia</taxon>
        <taxon>Eutheria</taxon>
        <taxon>Euarchontoglires</taxon>
        <taxon>Primates</taxon>
        <taxon>Haplorrhini</taxon>
        <taxon>Catarrhini</taxon>
        <taxon>Hominidae</taxon>
        <taxon>Pongo</taxon>
    </lineage>
</organism>
<proteinExistence type="inferred from homology"/>
<accession>Q5RBV4</accession>